<accession>O24456</accession>
<accession>C0Z2G7</accession>
<accession>Q9LDI1</accession>
<evidence type="ECO:0000269" key="1">
    <source>
    </source>
</evidence>
<evidence type="ECO:0000269" key="2">
    <source>
    </source>
</evidence>
<evidence type="ECO:0000269" key="3">
    <source>
    </source>
</evidence>
<evidence type="ECO:0000269" key="4">
    <source>
    </source>
</evidence>
<evidence type="ECO:0000269" key="5">
    <source>
    </source>
</evidence>
<evidence type="ECO:0000269" key="6">
    <source>
    </source>
</evidence>
<evidence type="ECO:0000303" key="7">
    <source>
    </source>
</evidence>
<evidence type="ECO:0000303" key="8">
    <source>
    </source>
</evidence>
<evidence type="ECO:0000303" key="9">
    <source>
    </source>
</evidence>
<evidence type="ECO:0000303" key="10">
    <source ref="1"/>
</evidence>
<evidence type="ECO:0000305" key="11"/>
<evidence type="ECO:0000312" key="12">
    <source>
        <dbReference type="Araport" id="AT1G18080"/>
    </source>
</evidence>
<evidence type="ECO:0000312" key="13">
    <source>
        <dbReference type="EMBL" id="AAF78369.1"/>
    </source>
</evidence>
<evidence type="ECO:0000312" key="14">
    <source>
        <dbReference type="EMBL" id="AAF97825.1"/>
    </source>
</evidence>
<evidence type="ECO:0007829" key="15">
    <source>
        <dbReference type="PDB" id="3DM0"/>
    </source>
</evidence>
<sequence length="327" mass="35748">MAEGLVLKGTMRAHTDMVTAIATPIDNADIIVSASRDKSIILWKLTKDDKAYGVAQRRLTGHSHFVEDVVLSSDGQFALSGSWDGELRLWDLAAGVSTRRFVGHTKDVLSVAFSLDNRQIVSASRDRTIKLWNTLGECKYTISEGGEGHRDWVSCVRFSPNTLQPTIVSASWDKTVKVWNLSNCKLRSTLAGHTGYVSTVAVSPDGSLCASGGKDGVVLLWDLAEGKKLYSLEANSVIHALCFSPNRYWLCAATEHGIKIWDLESKSIVEDLKVDLKAEAEKADNSGPAATKRKVIYCTSLNWSADGSTLFSGYTDGVIRVWGIGRY</sequence>
<comment type="function">
    <text evidence="1 2 3 6">Major component of the RACK1 regulatory proteins that play a role in multiple signal transduction pathways. Involved in multiple hormone responses and developmental processes (PubMed:16829549, PubMed:18715992, PubMed:18947417). MAPK cascade scaffolding protein involved in the protease IV and ArgC signaling pathway but not the flg22 pathway (PubMed:25731164).</text>
</comment>
<comment type="subunit">
    <text evidence="4 5 6 11">Homodimer and heterodimer with RACK1B or RACK1C (Probable). Interacts with NUDT7 (PubMed:22068106). Interacts with GB1, MEKK1, MKK4, MKK5, MPK3 and MPK6, but not with GPA1 or MPK4 (PubMed:25731164). Interacts with OFUT20 (PubMed:23435172).</text>
</comment>
<comment type="subcellular location">
    <subcellularLocation>
        <location evidence="4">Cytoplasm</location>
    </subcellularLocation>
    <subcellularLocation>
        <location evidence="4">Nucleus</location>
    </subcellularLocation>
    <text>Detected in the cytoplasm and nucleus when interacting with NUDT7.</text>
</comment>
<comment type="alternative products">
    <event type="alternative splicing"/>
    <isoform>
        <id>O24456-1</id>
        <name>1</name>
        <sequence type="displayed"/>
    </isoform>
    <isoform>
        <id>O24456-2</id>
        <name>2</name>
        <sequence type="described" ref="VSP_040397"/>
    </isoform>
</comment>
<comment type="tissue specificity">
    <text evidence="1 3">Widely expressed.</text>
</comment>
<comment type="disruption phenotype">
    <text evidence="1 2 3">Shorter hypocotyls in etiolated seedlings, epinastic cotyledons, reduced rosette leaf production by half and late flowering under short-day conditions. Reduced sensitivity to gibberellin and brassinosteroid in seed germination, hypersensitivity to abscisic acid in seed germination and early seedling development, and hyposensitivity to auxin in adventitious and lateral root formation. Plants show a significant resistance to water stress conditions by limiting water loss through the guard cells.</text>
</comment>
<comment type="similarity">
    <text evidence="11">Belongs to the WD repeat G protein beta family. Ribosomal protein RACK1 subfamily.</text>
</comment>
<keyword id="KW-0002">3D-structure</keyword>
<keyword id="KW-0025">Alternative splicing</keyword>
<keyword id="KW-0963">Cytoplasm</keyword>
<keyword id="KW-0539">Nucleus</keyword>
<keyword id="KW-1185">Reference proteome</keyword>
<keyword id="KW-0677">Repeat</keyword>
<keyword id="KW-0687">Ribonucleoprotein</keyword>
<keyword id="KW-0689">Ribosomal protein</keyword>
<keyword id="KW-0807">Transducer</keyword>
<keyword id="KW-0853">WD repeat</keyword>
<reference key="1">
    <citation type="online journal article" date="1997" name="Plant Gene Register">
        <title>AtArcA, the Arabidopsis thaliana homolog of the tobacco ArcA gene.</title>
        <authorList>
            <person name="Vahlkamp L."/>
            <person name="Palme K."/>
        </authorList>
        <locator>PGR97-145</locator>
    </citation>
    <scope>NUCLEOTIDE SEQUENCE [MRNA] (ISOFORM 1)</scope>
    <source>
        <strain>cv. Columbia</strain>
    </source>
</reference>
<reference key="2">
    <citation type="journal article" date="2000" name="Nature">
        <title>Sequence and analysis of chromosome 1 of the plant Arabidopsis thaliana.</title>
        <authorList>
            <person name="Theologis A."/>
            <person name="Ecker J.R."/>
            <person name="Palm C.J."/>
            <person name="Federspiel N.A."/>
            <person name="Kaul S."/>
            <person name="White O."/>
            <person name="Alonso J."/>
            <person name="Altafi H."/>
            <person name="Araujo R."/>
            <person name="Bowman C.L."/>
            <person name="Brooks S.Y."/>
            <person name="Buehler E."/>
            <person name="Chan A."/>
            <person name="Chao Q."/>
            <person name="Chen H."/>
            <person name="Cheuk R.F."/>
            <person name="Chin C.W."/>
            <person name="Chung M.K."/>
            <person name="Conn L."/>
            <person name="Conway A.B."/>
            <person name="Conway A.R."/>
            <person name="Creasy T.H."/>
            <person name="Dewar K."/>
            <person name="Dunn P."/>
            <person name="Etgu P."/>
            <person name="Feldblyum T.V."/>
            <person name="Feng J.-D."/>
            <person name="Fong B."/>
            <person name="Fujii C.Y."/>
            <person name="Gill J.E."/>
            <person name="Goldsmith A.D."/>
            <person name="Haas B."/>
            <person name="Hansen N.F."/>
            <person name="Hughes B."/>
            <person name="Huizar L."/>
            <person name="Hunter J.L."/>
            <person name="Jenkins J."/>
            <person name="Johnson-Hopson C."/>
            <person name="Khan S."/>
            <person name="Khaykin E."/>
            <person name="Kim C.J."/>
            <person name="Koo H.L."/>
            <person name="Kremenetskaia I."/>
            <person name="Kurtz D.B."/>
            <person name="Kwan A."/>
            <person name="Lam B."/>
            <person name="Langin-Hooper S."/>
            <person name="Lee A."/>
            <person name="Lee J.M."/>
            <person name="Lenz C.A."/>
            <person name="Li J.H."/>
            <person name="Li Y.-P."/>
            <person name="Lin X."/>
            <person name="Liu S.X."/>
            <person name="Liu Z.A."/>
            <person name="Luros J.S."/>
            <person name="Maiti R."/>
            <person name="Marziali A."/>
            <person name="Militscher J."/>
            <person name="Miranda M."/>
            <person name="Nguyen M."/>
            <person name="Nierman W.C."/>
            <person name="Osborne B.I."/>
            <person name="Pai G."/>
            <person name="Peterson J."/>
            <person name="Pham P.K."/>
            <person name="Rizzo M."/>
            <person name="Rooney T."/>
            <person name="Rowley D."/>
            <person name="Sakano H."/>
            <person name="Salzberg S.L."/>
            <person name="Schwartz J.R."/>
            <person name="Shinn P."/>
            <person name="Southwick A.M."/>
            <person name="Sun H."/>
            <person name="Tallon L.J."/>
            <person name="Tambunga G."/>
            <person name="Toriumi M.J."/>
            <person name="Town C.D."/>
            <person name="Utterback T."/>
            <person name="Van Aken S."/>
            <person name="Vaysberg M."/>
            <person name="Vysotskaia V.S."/>
            <person name="Walker M."/>
            <person name="Wu D."/>
            <person name="Yu G."/>
            <person name="Fraser C.M."/>
            <person name="Venter J.C."/>
            <person name="Davis R.W."/>
        </authorList>
    </citation>
    <scope>NUCLEOTIDE SEQUENCE [LARGE SCALE GENOMIC DNA]</scope>
    <source>
        <strain>cv. Columbia</strain>
    </source>
</reference>
<reference key="3">
    <citation type="journal article" date="2017" name="Plant J.">
        <title>Araport11: a complete reannotation of the Arabidopsis thaliana reference genome.</title>
        <authorList>
            <person name="Cheng C.Y."/>
            <person name="Krishnakumar V."/>
            <person name="Chan A.P."/>
            <person name="Thibaud-Nissen F."/>
            <person name="Schobel S."/>
            <person name="Town C.D."/>
        </authorList>
    </citation>
    <scope>GENOME REANNOTATION</scope>
    <source>
        <strain>cv. Columbia</strain>
    </source>
</reference>
<reference key="4">
    <citation type="journal article" date="2003" name="Science">
        <title>Empirical analysis of transcriptional activity in the Arabidopsis genome.</title>
        <authorList>
            <person name="Yamada K."/>
            <person name="Lim J."/>
            <person name="Dale J.M."/>
            <person name="Chen H."/>
            <person name="Shinn P."/>
            <person name="Palm C.J."/>
            <person name="Southwick A.M."/>
            <person name="Wu H.C."/>
            <person name="Kim C.J."/>
            <person name="Nguyen M."/>
            <person name="Pham P.K."/>
            <person name="Cheuk R.F."/>
            <person name="Karlin-Newmann G."/>
            <person name="Liu S.X."/>
            <person name="Lam B."/>
            <person name="Sakano H."/>
            <person name="Wu T."/>
            <person name="Yu G."/>
            <person name="Miranda M."/>
            <person name="Quach H.L."/>
            <person name="Tripp M."/>
            <person name="Chang C.H."/>
            <person name="Lee J.M."/>
            <person name="Toriumi M.J."/>
            <person name="Chan M.M."/>
            <person name="Tang C.C."/>
            <person name="Onodera C.S."/>
            <person name="Deng J.M."/>
            <person name="Akiyama K."/>
            <person name="Ansari Y."/>
            <person name="Arakawa T."/>
            <person name="Banh J."/>
            <person name="Banno F."/>
            <person name="Bowser L."/>
            <person name="Brooks S.Y."/>
            <person name="Carninci P."/>
            <person name="Chao Q."/>
            <person name="Choy N."/>
            <person name="Enju A."/>
            <person name="Goldsmith A.D."/>
            <person name="Gurjal M."/>
            <person name="Hansen N.F."/>
            <person name="Hayashizaki Y."/>
            <person name="Johnson-Hopson C."/>
            <person name="Hsuan V.W."/>
            <person name="Iida K."/>
            <person name="Karnes M."/>
            <person name="Khan S."/>
            <person name="Koesema E."/>
            <person name="Ishida J."/>
            <person name="Jiang P.X."/>
            <person name="Jones T."/>
            <person name="Kawai J."/>
            <person name="Kamiya A."/>
            <person name="Meyers C."/>
            <person name="Nakajima M."/>
            <person name="Narusaka M."/>
            <person name="Seki M."/>
            <person name="Sakurai T."/>
            <person name="Satou M."/>
            <person name="Tamse R."/>
            <person name="Vaysberg M."/>
            <person name="Wallender E.K."/>
            <person name="Wong C."/>
            <person name="Yamamura Y."/>
            <person name="Yuan S."/>
            <person name="Shinozaki K."/>
            <person name="Davis R.W."/>
            <person name="Theologis A."/>
            <person name="Ecker J.R."/>
        </authorList>
    </citation>
    <scope>NUCLEOTIDE SEQUENCE [LARGE SCALE MRNA] (ISOFORM 1)</scope>
    <source>
        <strain>cv. Columbia</strain>
    </source>
</reference>
<reference key="5">
    <citation type="journal article" date="2009" name="DNA Res.">
        <title>Analysis of multiple occurrences of alternative splicing events in Arabidopsis thaliana using novel sequenced full-length cDNAs.</title>
        <authorList>
            <person name="Iida K."/>
            <person name="Fukami-Kobayashi K."/>
            <person name="Toyoda A."/>
            <person name="Sakaki Y."/>
            <person name="Kobayashi M."/>
            <person name="Seki M."/>
            <person name="Shinozaki K."/>
        </authorList>
    </citation>
    <scope>NUCLEOTIDE SEQUENCE [LARGE SCALE MRNA] (ISOFORM 2)</scope>
    <source>
        <strain>cv. Columbia</strain>
    </source>
</reference>
<reference key="6">
    <citation type="submission" date="2002-03" db="EMBL/GenBank/DDBJ databases">
        <title>Full-length cDNA from Arabidopsis thaliana.</title>
        <authorList>
            <person name="Brover V.V."/>
            <person name="Troukhan M.E."/>
            <person name="Alexandrov N.A."/>
            <person name="Lu Y.-P."/>
            <person name="Flavell R.B."/>
            <person name="Feldmann K.A."/>
        </authorList>
    </citation>
    <scope>NUCLEOTIDE SEQUENCE [LARGE SCALE MRNA] (ISOFORM 1)</scope>
</reference>
<reference key="7">
    <citation type="journal article" date="2006" name="J. Exp. Bot.">
        <title>RACK1 mediates multiple hormone responsiveness and developmental processes in Arabidopsis.</title>
        <authorList>
            <person name="Chen J.G."/>
            <person name="Ullah H."/>
            <person name="Temple B."/>
            <person name="Liang J."/>
            <person name="Guo J."/>
            <person name="Alonso J.M."/>
            <person name="Ecker J.R."/>
            <person name="Jones A.M."/>
        </authorList>
    </citation>
    <scope>FUNCTION</scope>
    <scope>TISSUE SPECIFICITY</scope>
    <scope>DISRUPTION PHENOTYPE</scope>
</reference>
<reference key="8">
    <citation type="journal article" date="2008" name="BMC Plant Biol.">
        <title>RACK1 genes regulate plant development with unequal genetic redundancy in Arabidopsis.</title>
        <authorList>
            <person name="Guo J."/>
            <person name="Chen J.G."/>
        </authorList>
    </citation>
    <scope>FUNCTION</scope>
    <scope>TISSUE SPECIFICITY</scope>
    <scope>DISRUPTION PHENOTYPE</scope>
</reference>
<reference key="9">
    <citation type="journal article" date="2011" name="Acta Biochim. Pol.">
        <title>Arabidopsis thaliana Nudix hydrolase AtNUDT7 forms complexes with the regulatory RACK1A protein and Ggamma subunits of the signal transducing heterotrimeric G protein.</title>
        <authorList>
            <person name="Olejnik K."/>
            <person name="Bucholc M."/>
            <person name="Anielska-Mazur A."/>
            <person name="Lipko A."/>
            <person name="Kujawa M."/>
            <person name="Modzelan M."/>
            <person name="Augustyn A."/>
            <person name="Kraszewska E."/>
        </authorList>
    </citation>
    <scope>INTERACTION WITH NUDT7</scope>
    <scope>SUBCELLULAR LOCATION</scope>
</reference>
<reference key="10">
    <citation type="journal article" date="2013" name="Plant Signal. Behav.">
        <title>Arabidopsis scaffold protein RACK1A interacts with diverse environmental stress and photosynthesis related proteins.</title>
        <authorList>
            <person name="Kundu N."/>
            <person name="Dozier U."/>
            <person name="Deslandes L."/>
            <person name="Somssich I.E."/>
            <person name="Ullah H."/>
        </authorList>
    </citation>
    <scope>INTERACTION WITH OFUT20</scope>
</reference>
<reference key="11">
    <citation type="journal article" date="2023" name="Plant Cell">
        <title>An updated nomenclature for plant ribosomal protein genes.</title>
        <authorList>
            <person name="Scarpin M.R."/>
            <person name="Busche M."/>
            <person name="Martinez R.E."/>
            <person name="Harper L.C."/>
            <person name="Reiser L."/>
            <person name="Szakonyi D."/>
            <person name="Merchante C."/>
            <person name="Lan T."/>
            <person name="Xiong W."/>
            <person name="Mo B."/>
            <person name="Tang G."/>
            <person name="Chen X."/>
            <person name="Bailey-Serres J."/>
            <person name="Browning K.S."/>
            <person name="Brunkard J.O."/>
        </authorList>
    </citation>
    <scope>NOMENCLATURE</scope>
</reference>
<reference key="12">
    <citation type="journal article" date="2008" name="Protein Sci.">
        <title>Structure of a signal transduction regulator, RACK1, from Arabidopsis thaliana.</title>
        <authorList>
            <person name="Ullah H."/>
            <person name="Scappini E.L."/>
            <person name="Moon A.F."/>
            <person name="Williams L.V."/>
            <person name="Armstrong D.L."/>
            <person name="Pedersen L.C."/>
        </authorList>
    </citation>
    <scope>X-RAY CRYSTALLOGRAPHY (2.40 ANGSTROMS) OF 4-327</scope>
    <scope>FUNCTION</scope>
    <scope>DISRUPTION PHENOTYPE</scope>
</reference>
<reference key="13">
    <citation type="journal article" date="2015" name="Nature">
        <title>Pathogen-secreted proteases activate a novel plant immune pathway.</title>
        <authorList>
            <person name="Cheng Z."/>
            <person name="Li J.F."/>
            <person name="Niu Y."/>
            <person name="Zhang X.C."/>
            <person name="Woody O.Z."/>
            <person name="Xiong Y."/>
            <person name="Djonovic S."/>
            <person name="Millet Y."/>
            <person name="Bush J."/>
            <person name="McConkey B.J."/>
            <person name="Sheen J."/>
            <person name="Ausubel F.M."/>
        </authorList>
    </citation>
    <scope>FUNCTION</scope>
    <scope>INTERACTION WITH GB1; MEKK1; MKK4; MKK5; MPK3 AND MPK6</scope>
</reference>
<organism>
    <name type="scientific">Arabidopsis thaliana</name>
    <name type="common">Mouse-ear cress</name>
    <dbReference type="NCBI Taxonomy" id="3702"/>
    <lineage>
        <taxon>Eukaryota</taxon>
        <taxon>Viridiplantae</taxon>
        <taxon>Streptophyta</taxon>
        <taxon>Embryophyta</taxon>
        <taxon>Tracheophyta</taxon>
        <taxon>Spermatophyta</taxon>
        <taxon>Magnoliopsida</taxon>
        <taxon>eudicotyledons</taxon>
        <taxon>Gunneridae</taxon>
        <taxon>Pentapetalae</taxon>
        <taxon>rosids</taxon>
        <taxon>malvids</taxon>
        <taxon>Brassicales</taxon>
        <taxon>Brassicaceae</taxon>
        <taxon>Camelineae</taxon>
        <taxon>Arabidopsis</taxon>
    </lineage>
</organism>
<gene>
    <name evidence="7" type="primary">RACK1A</name>
    <name evidence="10" type="synonym">ARCA</name>
    <name evidence="12" type="ordered locus">At1g18080</name>
    <name evidence="14" type="ORF">T10F20.9</name>
    <name evidence="13" type="ORF">T10O22.6</name>
</gene>
<protein>
    <recommendedName>
        <fullName evidence="9">Small ribosomal subunit protein RACK1z</fullName>
    </recommendedName>
    <alternativeName>
        <fullName>Guanine nucleotide-binding protein subunit beta-like protein A</fullName>
    </alternativeName>
    <alternativeName>
        <fullName evidence="7">Receptor for activated C kinase 1A</fullName>
    </alternativeName>
    <alternativeName>
        <fullName>WD-40 repeat auxin-dependent protein ARCA</fullName>
    </alternativeName>
</protein>
<proteinExistence type="evidence at protein level"/>
<dbReference type="EMBL" id="U77381">
    <property type="protein sequence ID" value="AAB82647.1"/>
    <property type="molecule type" value="mRNA"/>
</dbReference>
<dbReference type="EMBL" id="AC034107">
    <property type="protein sequence ID" value="AAF97825.1"/>
    <property type="molecule type" value="Genomic_DNA"/>
</dbReference>
<dbReference type="EMBL" id="AC069551">
    <property type="protein sequence ID" value="AAF78369.1"/>
    <property type="molecule type" value="Genomic_DNA"/>
</dbReference>
<dbReference type="EMBL" id="CP002684">
    <property type="protein sequence ID" value="AEE29673.1"/>
    <property type="molecule type" value="Genomic_DNA"/>
</dbReference>
<dbReference type="EMBL" id="AY035007">
    <property type="protein sequence ID" value="AAK59512.1"/>
    <property type="molecule type" value="mRNA"/>
</dbReference>
<dbReference type="EMBL" id="AY063016">
    <property type="protein sequence ID" value="AAL34190.1"/>
    <property type="molecule type" value="mRNA"/>
</dbReference>
<dbReference type="EMBL" id="AK318781">
    <property type="protein sequence ID" value="BAH56896.1"/>
    <property type="molecule type" value="mRNA"/>
</dbReference>
<dbReference type="EMBL" id="AY088480">
    <property type="protein sequence ID" value="AAM66016.1"/>
    <property type="molecule type" value="mRNA"/>
</dbReference>
<dbReference type="RefSeq" id="NP_173248.1">
    <molecule id="O24456-1"/>
    <property type="nucleotide sequence ID" value="NM_101670.3"/>
</dbReference>
<dbReference type="PDB" id="3DM0">
    <property type="method" value="X-ray"/>
    <property type="resolution" value="2.40 A"/>
    <property type="chains" value="A=1-327"/>
</dbReference>
<dbReference type="PDBsum" id="3DM0"/>
<dbReference type="SMR" id="O24456"/>
<dbReference type="BioGRID" id="23627">
    <property type="interactions" value="295"/>
</dbReference>
<dbReference type="FunCoup" id="O24456">
    <property type="interactions" value="3476"/>
</dbReference>
<dbReference type="IntAct" id="O24456">
    <property type="interactions" value="1"/>
</dbReference>
<dbReference type="STRING" id="3702.O24456"/>
<dbReference type="iPTMnet" id="O24456"/>
<dbReference type="PaxDb" id="3702-AT1G18080.1"/>
<dbReference type="ProteomicsDB" id="248613">
    <molecule id="O24456-1"/>
</dbReference>
<dbReference type="EnsemblPlants" id="AT1G18080.1">
    <molecule id="O24456-1"/>
    <property type="protein sequence ID" value="AT1G18080.1"/>
    <property type="gene ID" value="AT1G18080"/>
</dbReference>
<dbReference type="GeneID" id="838388"/>
<dbReference type="Gramene" id="AT1G18080.1">
    <molecule id="O24456-1"/>
    <property type="protein sequence ID" value="AT1G18080.1"/>
    <property type="gene ID" value="AT1G18080"/>
</dbReference>
<dbReference type="KEGG" id="ath:AT1G18080"/>
<dbReference type="Araport" id="AT1G18080"/>
<dbReference type="TAIR" id="AT1G18080">
    <property type="gene designation" value="ATARCA"/>
</dbReference>
<dbReference type="eggNOG" id="KOG0279">
    <property type="taxonomic scope" value="Eukaryota"/>
</dbReference>
<dbReference type="HOGENOM" id="CLU_000288_57_7_1"/>
<dbReference type="InParanoid" id="O24456"/>
<dbReference type="OMA" id="AQVPYCV"/>
<dbReference type="OrthoDB" id="7875889at2759"/>
<dbReference type="PhylomeDB" id="O24456"/>
<dbReference type="CD-CODE" id="4299E36E">
    <property type="entry name" value="Nucleolus"/>
</dbReference>
<dbReference type="EvolutionaryTrace" id="O24456"/>
<dbReference type="PRO" id="PR:O24456"/>
<dbReference type="Proteomes" id="UP000006548">
    <property type="component" value="Chromosome 1"/>
</dbReference>
<dbReference type="ExpressionAtlas" id="O24456">
    <property type="expression patterns" value="baseline and differential"/>
</dbReference>
<dbReference type="GO" id="GO:0009507">
    <property type="term" value="C:chloroplast"/>
    <property type="evidence" value="ECO:0007005"/>
    <property type="project" value="TAIR"/>
</dbReference>
<dbReference type="GO" id="GO:0005737">
    <property type="term" value="C:cytoplasm"/>
    <property type="evidence" value="ECO:0000314"/>
    <property type="project" value="UniProtKB"/>
</dbReference>
<dbReference type="GO" id="GO:0005829">
    <property type="term" value="C:cytosol"/>
    <property type="evidence" value="ECO:0000314"/>
    <property type="project" value="TAIR"/>
</dbReference>
<dbReference type="GO" id="GO:0022626">
    <property type="term" value="C:cytosolic ribosome"/>
    <property type="evidence" value="ECO:0007005"/>
    <property type="project" value="TAIR"/>
</dbReference>
<dbReference type="GO" id="GO:0005634">
    <property type="term" value="C:nucleus"/>
    <property type="evidence" value="ECO:0000314"/>
    <property type="project" value="UniProtKB"/>
</dbReference>
<dbReference type="GO" id="GO:1990904">
    <property type="term" value="C:ribonucleoprotein complex"/>
    <property type="evidence" value="ECO:0007669"/>
    <property type="project" value="UniProtKB-KW"/>
</dbReference>
<dbReference type="GO" id="GO:0005078">
    <property type="term" value="F:MAP-kinase scaffold activity"/>
    <property type="evidence" value="ECO:0000315"/>
    <property type="project" value="UniProtKB"/>
</dbReference>
<dbReference type="GO" id="GO:0060090">
    <property type="term" value="F:molecular adaptor activity"/>
    <property type="evidence" value="ECO:0000314"/>
    <property type="project" value="TAIR"/>
</dbReference>
<dbReference type="GO" id="GO:0003729">
    <property type="term" value="F:mRNA binding"/>
    <property type="evidence" value="ECO:0000314"/>
    <property type="project" value="TAIR"/>
</dbReference>
<dbReference type="GO" id="GO:0043022">
    <property type="term" value="F:ribosome binding"/>
    <property type="evidence" value="ECO:0007669"/>
    <property type="project" value="InterPro"/>
</dbReference>
<dbReference type="GO" id="GO:0003735">
    <property type="term" value="F:structural constituent of ribosome"/>
    <property type="evidence" value="ECO:0000314"/>
    <property type="project" value="CAFA"/>
</dbReference>
<dbReference type="GO" id="GO:0045182">
    <property type="term" value="F:translation regulator activity"/>
    <property type="evidence" value="ECO:0007669"/>
    <property type="project" value="InterPro"/>
</dbReference>
<dbReference type="GO" id="GO:0071215">
    <property type="term" value="P:cellular response to abscisic acid stimulus"/>
    <property type="evidence" value="ECO:0000270"/>
    <property type="project" value="TAIR"/>
</dbReference>
<dbReference type="GO" id="GO:0010476">
    <property type="term" value="P:gibberellin mediated signaling pathway"/>
    <property type="evidence" value="ECO:0000315"/>
    <property type="project" value="TAIR"/>
</dbReference>
<dbReference type="GO" id="GO:0009967">
    <property type="term" value="P:positive regulation of signal transduction"/>
    <property type="evidence" value="ECO:0000315"/>
    <property type="project" value="UniProtKB"/>
</dbReference>
<dbReference type="GO" id="GO:0006417">
    <property type="term" value="P:regulation of translation"/>
    <property type="evidence" value="ECO:0000316"/>
    <property type="project" value="TAIR"/>
</dbReference>
<dbReference type="GO" id="GO:0009739">
    <property type="term" value="P:response to gibberellin"/>
    <property type="evidence" value="ECO:0000270"/>
    <property type="project" value="TAIR"/>
</dbReference>
<dbReference type="GO" id="GO:0009749">
    <property type="term" value="P:response to glucose"/>
    <property type="evidence" value="ECO:0000315"/>
    <property type="project" value="TAIR"/>
</dbReference>
<dbReference type="GO" id="GO:0042254">
    <property type="term" value="P:ribosome biogenesis"/>
    <property type="evidence" value="ECO:0000316"/>
    <property type="project" value="TAIR"/>
</dbReference>
<dbReference type="GO" id="GO:0009845">
    <property type="term" value="P:seed germination"/>
    <property type="evidence" value="ECO:0000316"/>
    <property type="project" value="TAIR"/>
</dbReference>
<dbReference type="GO" id="GO:0010228">
    <property type="term" value="P:vegetative to reproductive phase transition of meristem"/>
    <property type="evidence" value="ECO:0000315"/>
    <property type="project" value="TAIR"/>
</dbReference>
<dbReference type="CDD" id="cd00200">
    <property type="entry name" value="WD40"/>
    <property type="match status" value="1"/>
</dbReference>
<dbReference type="FunFam" id="2.130.10.10:FF:000018">
    <property type="entry name" value="Receptor for activated C kinase 1"/>
    <property type="match status" value="1"/>
</dbReference>
<dbReference type="Gene3D" id="2.130.10.10">
    <property type="entry name" value="YVTN repeat-like/Quinoprotein amine dehydrogenase"/>
    <property type="match status" value="1"/>
</dbReference>
<dbReference type="InterPro" id="IPR020472">
    <property type="entry name" value="G-protein_beta_WD-40_rep"/>
</dbReference>
<dbReference type="InterPro" id="IPR045223">
    <property type="entry name" value="RACK1-like"/>
</dbReference>
<dbReference type="InterPro" id="IPR015943">
    <property type="entry name" value="WD40/YVTN_repeat-like_dom_sf"/>
</dbReference>
<dbReference type="InterPro" id="IPR019775">
    <property type="entry name" value="WD40_repeat_CS"/>
</dbReference>
<dbReference type="InterPro" id="IPR036322">
    <property type="entry name" value="WD40_repeat_dom_sf"/>
</dbReference>
<dbReference type="InterPro" id="IPR001680">
    <property type="entry name" value="WD40_rpt"/>
</dbReference>
<dbReference type="PANTHER" id="PTHR19868">
    <property type="entry name" value="RECEPTOR FOR ACTIVATED PROTEIN KINASE C RACK1"/>
    <property type="match status" value="1"/>
</dbReference>
<dbReference type="Pfam" id="PF00400">
    <property type="entry name" value="WD40"/>
    <property type="match status" value="7"/>
</dbReference>
<dbReference type="PRINTS" id="PR00320">
    <property type="entry name" value="GPROTEINBRPT"/>
</dbReference>
<dbReference type="SMART" id="SM00320">
    <property type="entry name" value="WD40"/>
    <property type="match status" value="7"/>
</dbReference>
<dbReference type="SUPFAM" id="SSF50978">
    <property type="entry name" value="WD40 repeat-like"/>
    <property type="match status" value="1"/>
</dbReference>
<dbReference type="PROSITE" id="PS00678">
    <property type="entry name" value="WD_REPEATS_1"/>
    <property type="match status" value="4"/>
</dbReference>
<dbReference type="PROSITE" id="PS50082">
    <property type="entry name" value="WD_REPEATS_2"/>
    <property type="match status" value="6"/>
</dbReference>
<dbReference type="PROSITE" id="PS50294">
    <property type="entry name" value="WD_REPEATS_REGION"/>
    <property type="match status" value="1"/>
</dbReference>
<name>GBLPA_ARATH</name>
<feature type="chain" id="PRO_0000127748" description="Small ribosomal subunit protein RACK1z">
    <location>
        <begin position="1"/>
        <end position="327"/>
    </location>
</feature>
<feature type="repeat" description="WD 1">
    <location>
        <begin position="13"/>
        <end position="44"/>
    </location>
</feature>
<feature type="repeat" description="WD 2">
    <location>
        <begin position="61"/>
        <end position="91"/>
    </location>
</feature>
<feature type="repeat" description="WD 3">
    <location>
        <begin position="103"/>
        <end position="133"/>
    </location>
</feature>
<feature type="repeat" description="WD 4">
    <location>
        <begin position="148"/>
        <end position="180"/>
    </location>
</feature>
<feature type="repeat" description="WD 5">
    <location>
        <begin position="192"/>
        <end position="222"/>
    </location>
</feature>
<feature type="repeat" description="WD 6">
    <location>
        <begin position="233"/>
        <end position="262"/>
    </location>
</feature>
<feature type="repeat" description="WD 7">
    <location>
        <begin position="293"/>
        <end position="323"/>
    </location>
</feature>
<feature type="splice variant" id="VSP_040397" description="In isoform 2." evidence="8">
    <location>
        <begin position="195"/>
        <end position="245"/>
    </location>
</feature>
<feature type="sequence conflict" description="In Ref. 1; AAB82647." evidence="11" ref="1">
    <original>V</original>
    <variation>M</variation>
    <location>
        <position position="178"/>
    </location>
</feature>
<feature type="strand" evidence="15">
    <location>
        <begin position="4"/>
        <end position="12"/>
    </location>
</feature>
<feature type="strand" evidence="15">
    <location>
        <begin position="18"/>
        <end position="22"/>
    </location>
</feature>
<feature type="strand" evidence="15">
    <location>
        <begin position="29"/>
        <end position="35"/>
    </location>
</feature>
<feature type="strand" evidence="15">
    <location>
        <begin position="38"/>
        <end position="44"/>
    </location>
</feature>
<feature type="strand" evidence="15">
    <location>
        <begin position="54"/>
        <end position="60"/>
    </location>
</feature>
<feature type="strand" evidence="15">
    <location>
        <begin position="66"/>
        <end position="71"/>
    </location>
</feature>
<feature type="strand" evidence="15">
    <location>
        <begin position="75"/>
        <end position="82"/>
    </location>
</feature>
<feature type="strand" evidence="15">
    <location>
        <begin position="85"/>
        <end position="91"/>
    </location>
</feature>
<feature type="turn" evidence="15">
    <location>
        <begin position="92"/>
        <end position="95"/>
    </location>
</feature>
<feature type="strand" evidence="15">
    <location>
        <begin position="96"/>
        <end position="102"/>
    </location>
</feature>
<feature type="strand" evidence="15">
    <location>
        <begin position="108"/>
        <end position="113"/>
    </location>
</feature>
<feature type="strand" evidence="15">
    <location>
        <begin position="120"/>
        <end position="124"/>
    </location>
</feature>
<feature type="strand" evidence="15">
    <location>
        <begin position="129"/>
        <end position="132"/>
    </location>
</feature>
<feature type="strand" evidence="15">
    <location>
        <begin position="138"/>
        <end position="142"/>
    </location>
</feature>
<feature type="strand" evidence="15">
    <location>
        <begin position="153"/>
        <end position="158"/>
    </location>
</feature>
<feature type="strand" evidence="15">
    <location>
        <begin position="162"/>
        <end position="164"/>
    </location>
</feature>
<feature type="strand" evidence="15">
    <location>
        <begin position="166"/>
        <end position="171"/>
    </location>
</feature>
<feature type="strand" evidence="15">
    <location>
        <begin position="176"/>
        <end position="180"/>
    </location>
</feature>
<feature type="turn" evidence="15">
    <location>
        <begin position="181"/>
        <end position="183"/>
    </location>
</feature>
<feature type="strand" evidence="15">
    <location>
        <begin position="186"/>
        <end position="190"/>
    </location>
</feature>
<feature type="strand" evidence="15">
    <location>
        <begin position="197"/>
        <end position="202"/>
    </location>
</feature>
<feature type="strand" evidence="15">
    <location>
        <begin position="206"/>
        <end position="213"/>
    </location>
</feature>
<feature type="strand" evidence="15">
    <location>
        <begin position="219"/>
        <end position="222"/>
    </location>
</feature>
<feature type="turn" evidence="15">
    <location>
        <begin position="223"/>
        <end position="226"/>
    </location>
</feature>
<feature type="strand" evidence="15">
    <location>
        <begin position="227"/>
        <end position="230"/>
    </location>
</feature>
<feature type="strand" evidence="15">
    <location>
        <begin position="238"/>
        <end position="243"/>
    </location>
</feature>
<feature type="strand" evidence="15">
    <location>
        <begin position="245"/>
        <end position="254"/>
    </location>
</feature>
<feature type="strand" evidence="15">
    <location>
        <begin position="257"/>
        <end position="262"/>
    </location>
</feature>
<feature type="turn" evidence="15">
    <location>
        <begin position="263"/>
        <end position="266"/>
    </location>
</feature>
<feature type="strand" evidence="15">
    <location>
        <begin position="267"/>
        <end position="272"/>
    </location>
</feature>
<feature type="strand" evidence="15">
    <location>
        <begin position="298"/>
        <end position="303"/>
    </location>
</feature>
<feature type="strand" evidence="15">
    <location>
        <begin position="307"/>
        <end position="314"/>
    </location>
</feature>
<feature type="strand" evidence="15">
    <location>
        <begin position="317"/>
        <end position="323"/>
    </location>
</feature>